<protein>
    <recommendedName>
        <fullName evidence="1">Cell division protein FtsB</fullName>
    </recommendedName>
</protein>
<comment type="function">
    <text evidence="1">Essential cell division protein. May link together the upstream cell division proteins, which are predominantly cytoplasmic, with the downstream cell division proteins, which are predominantly periplasmic.</text>
</comment>
<comment type="subunit">
    <text evidence="1">Part of a complex composed of FtsB, FtsL and FtsQ.</text>
</comment>
<comment type="subcellular location">
    <subcellularLocation>
        <location evidence="1">Cell inner membrane</location>
        <topology evidence="1">Single-pass type II membrane protein</topology>
    </subcellularLocation>
    <text evidence="1">Localizes to the division septum.</text>
</comment>
<comment type="similarity">
    <text evidence="1">Belongs to the FtsB family.</text>
</comment>
<proteinExistence type="inferred from homology"/>
<organism>
    <name type="scientific">Shewanella sp. (strain W3-18-1)</name>
    <dbReference type="NCBI Taxonomy" id="351745"/>
    <lineage>
        <taxon>Bacteria</taxon>
        <taxon>Pseudomonadati</taxon>
        <taxon>Pseudomonadota</taxon>
        <taxon>Gammaproteobacteria</taxon>
        <taxon>Alteromonadales</taxon>
        <taxon>Shewanellaceae</taxon>
        <taxon>Shewanella</taxon>
    </lineage>
</organism>
<name>FTSB_SHESW</name>
<accession>A1RHF4</accession>
<evidence type="ECO:0000255" key="1">
    <source>
        <dbReference type="HAMAP-Rule" id="MF_00599"/>
    </source>
</evidence>
<feature type="chain" id="PRO_1000025726" description="Cell division protein FtsB">
    <location>
        <begin position="1"/>
        <end position="99"/>
    </location>
</feature>
<feature type="topological domain" description="Cytoplasmic" evidence="1">
    <location>
        <begin position="1"/>
        <end position="3"/>
    </location>
</feature>
<feature type="transmembrane region" description="Helical" evidence="1">
    <location>
        <begin position="4"/>
        <end position="21"/>
    </location>
</feature>
<feature type="topological domain" description="Periplasmic" evidence="1">
    <location>
        <begin position="22"/>
        <end position="99"/>
    </location>
</feature>
<feature type="coiled-coil region" evidence="1">
    <location>
        <begin position="36"/>
        <end position="73"/>
    </location>
</feature>
<keyword id="KW-0131">Cell cycle</keyword>
<keyword id="KW-0132">Cell division</keyword>
<keyword id="KW-0997">Cell inner membrane</keyword>
<keyword id="KW-1003">Cell membrane</keyword>
<keyword id="KW-0175">Coiled coil</keyword>
<keyword id="KW-0472">Membrane</keyword>
<keyword id="KW-0812">Transmembrane</keyword>
<keyword id="KW-1133">Transmembrane helix</keyword>
<sequence length="99" mass="11270">MKFFVIALIVLLGLLQYRLWSGSNSLPEYFVLQKHIAVQQEGNDKLNERNQVLKEEIIDLKSGTEAIEERARNELGMVKEGETFYRVVGGERSVSSPSQ</sequence>
<reference key="1">
    <citation type="submission" date="2006-12" db="EMBL/GenBank/DDBJ databases">
        <title>Complete sequence of Shewanella sp. W3-18-1.</title>
        <authorList>
            <consortium name="US DOE Joint Genome Institute"/>
            <person name="Copeland A."/>
            <person name="Lucas S."/>
            <person name="Lapidus A."/>
            <person name="Barry K."/>
            <person name="Detter J.C."/>
            <person name="Glavina del Rio T."/>
            <person name="Hammon N."/>
            <person name="Israni S."/>
            <person name="Dalin E."/>
            <person name="Tice H."/>
            <person name="Pitluck S."/>
            <person name="Chain P."/>
            <person name="Malfatti S."/>
            <person name="Shin M."/>
            <person name="Vergez L."/>
            <person name="Schmutz J."/>
            <person name="Larimer F."/>
            <person name="Land M."/>
            <person name="Hauser L."/>
            <person name="Kyrpides N."/>
            <person name="Lykidis A."/>
            <person name="Tiedje J."/>
            <person name="Richardson P."/>
        </authorList>
    </citation>
    <scope>NUCLEOTIDE SEQUENCE [LARGE SCALE GENOMIC DNA]</scope>
    <source>
        <strain>W3-18-1</strain>
    </source>
</reference>
<gene>
    <name evidence="1" type="primary">ftsB</name>
    <name type="ordered locus">Sputw3181_1256</name>
</gene>
<dbReference type="EMBL" id="CP000503">
    <property type="protein sequence ID" value="ABM24099.1"/>
    <property type="molecule type" value="Genomic_DNA"/>
</dbReference>
<dbReference type="SMR" id="A1RHF4"/>
<dbReference type="KEGG" id="shw:Sputw3181_1256"/>
<dbReference type="HOGENOM" id="CLU_134863_5_2_6"/>
<dbReference type="Proteomes" id="UP000002597">
    <property type="component" value="Chromosome"/>
</dbReference>
<dbReference type="GO" id="GO:0032153">
    <property type="term" value="C:cell division site"/>
    <property type="evidence" value="ECO:0007669"/>
    <property type="project" value="UniProtKB-UniRule"/>
</dbReference>
<dbReference type="GO" id="GO:0030428">
    <property type="term" value="C:cell septum"/>
    <property type="evidence" value="ECO:0007669"/>
    <property type="project" value="TreeGrafter"/>
</dbReference>
<dbReference type="GO" id="GO:0005886">
    <property type="term" value="C:plasma membrane"/>
    <property type="evidence" value="ECO:0007669"/>
    <property type="project" value="UniProtKB-SubCell"/>
</dbReference>
<dbReference type="GO" id="GO:0043093">
    <property type="term" value="P:FtsZ-dependent cytokinesis"/>
    <property type="evidence" value="ECO:0007669"/>
    <property type="project" value="UniProtKB-UniRule"/>
</dbReference>
<dbReference type="HAMAP" id="MF_00599">
    <property type="entry name" value="FtsB"/>
    <property type="match status" value="1"/>
</dbReference>
<dbReference type="InterPro" id="IPR023081">
    <property type="entry name" value="Cell_div_FtsB"/>
</dbReference>
<dbReference type="InterPro" id="IPR007060">
    <property type="entry name" value="FtsL/DivIC"/>
</dbReference>
<dbReference type="NCBIfam" id="NF002058">
    <property type="entry name" value="PRK00888.1"/>
    <property type="match status" value="1"/>
</dbReference>
<dbReference type="PANTHER" id="PTHR37485">
    <property type="entry name" value="CELL DIVISION PROTEIN FTSB"/>
    <property type="match status" value="1"/>
</dbReference>
<dbReference type="PANTHER" id="PTHR37485:SF1">
    <property type="entry name" value="CELL DIVISION PROTEIN FTSB"/>
    <property type="match status" value="1"/>
</dbReference>
<dbReference type="Pfam" id="PF04977">
    <property type="entry name" value="DivIC"/>
    <property type="match status" value="1"/>
</dbReference>